<dbReference type="EC" id="2.7.6.1" evidence="1"/>
<dbReference type="EMBL" id="AE007317">
    <property type="protein sequence ID" value="AAK98832.1"/>
    <property type="status" value="ALT_INIT"/>
    <property type="molecule type" value="Genomic_DNA"/>
</dbReference>
<dbReference type="PIR" id="D97875">
    <property type="entry name" value="D97875"/>
</dbReference>
<dbReference type="RefSeq" id="NP_357622.1">
    <property type="nucleotide sequence ID" value="NC_003098.1"/>
</dbReference>
<dbReference type="RefSeq" id="WP_000010163.1">
    <property type="nucleotide sequence ID" value="NC_003098.1"/>
</dbReference>
<dbReference type="SMR" id="P65240"/>
<dbReference type="STRING" id="171101.spr0028"/>
<dbReference type="KEGG" id="spr:spr0028"/>
<dbReference type="PATRIC" id="fig|171101.6.peg.31"/>
<dbReference type="eggNOG" id="COG0462">
    <property type="taxonomic scope" value="Bacteria"/>
</dbReference>
<dbReference type="HOGENOM" id="CLU_033546_4_0_9"/>
<dbReference type="UniPathway" id="UPA00087">
    <property type="reaction ID" value="UER00172"/>
</dbReference>
<dbReference type="Proteomes" id="UP000000586">
    <property type="component" value="Chromosome"/>
</dbReference>
<dbReference type="GO" id="GO:0005737">
    <property type="term" value="C:cytoplasm"/>
    <property type="evidence" value="ECO:0000318"/>
    <property type="project" value="GO_Central"/>
</dbReference>
<dbReference type="GO" id="GO:0002189">
    <property type="term" value="C:ribose phosphate diphosphokinase complex"/>
    <property type="evidence" value="ECO:0000318"/>
    <property type="project" value="GO_Central"/>
</dbReference>
<dbReference type="GO" id="GO:0005524">
    <property type="term" value="F:ATP binding"/>
    <property type="evidence" value="ECO:0007669"/>
    <property type="project" value="UniProtKB-KW"/>
</dbReference>
<dbReference type="GO" id="GO:0016301">
    <property type="term" value="F:kinase activity"/>
    <property type="evidence" value="ECO:0007669"/>
    <property type="project" value="UniProtKB-KW"/>
</dbReference>
<dbReference type="GO" id="GO:0000287">
    <property type="term" value="F:magnesium ion binding"/>
    <property type="evidence" value="ECO:0007669"/>
    <property type="project" value="UniProtKB-UniRule"/>
</dbReference>
<dbReference type="GO" id="GO:0004749">
    <property type="term" value="F:ribose phosphate diphosphokinase activity"/>
    <property type="evidence" value="ECO:0000318"/>
    <property type="project" value="GO_Central"/>
</dbReference>
<dbReference type="GO" id="GO:0006015">
    <property type="term" value="P:5-phosphoribose 1-diphosphate biosynthetic process"/>
    <property type="evidence" value="ECO:0000318"/>
    <property type="project" value="GO_Central"/>
</dbReference>
<dbReference type="GO" id="GO:0006164">
    <property type="term" value="P:purine nucleotide biosynthetic process"/>
    <property type="evidence" value="ECO:0000318"/>
    <property type="project" value="GO_Central"/>
</dbReference>
<dbReference type="GO" id="GO:0009156">
    <property type="term" value="P:ribonucleoside monophosphate biosynthetic process"/>
    <property type="evidence" value="ECO:0007669"/>
    <property type="project" value="InterPro"/>
</dbReference>
<dbReference type="CDD" id="cd06223">
    <property type="entry name" value="PRTases_typeI"/>
    <property type="match status" value="1"/>
</dbReference>
<dbReference type="FunFam" id="3.40.50.2020:FF:000001">
    <property type="entry name" value="Ribose-phosphate pyrophosphokinase"/>
    <property type="match status" value="1"/>
</dbReference>
<dbReference type="Gene3D" id="3.40.50.2020">
    <property type="match status" value="2"/>
</dbReference>
<dbReference type="HAMAP" id="MF_00583_B">
    <property type="entry name" value="RibP_PPkinase_B"/>
    <property type="match status" value="1"/>
</dbReference>
<dbReference type="InterPro" id="IPR000842">
    <property type="entry name" value="PRib_PP_synth_CS"/>
</dbReference>
<dbReference type="InterPro" id="IPR029099">
    <property type="entry name" value="Pribosyltran_N"/>
</dbReference>
<dbReference type="InterPro" id="IPR000836">
    <property type="entry name" value="PRibTrfase_dom"/>
</dbReference>
<dbReference type="InterPro" id="IPR029057">
    <property type="entry name" value="PRTase-like"/>
</dbReference>
<dbReference type="InterPro" id="IPR005946">
    <property type="entry name" value="Rib-P_diPkinase"/>
</dbReference>
<dbReference type="InterPro" id="IPR037515">
    <property type="entry name" value="Rib-P_diPkinase_bac"/>
</dbReference>
<dbReference type="NCBIfam" id="NF002320">
    <property type="entry name" value="PRK01259.1"/>
    <property type="match status" value="1"/>
</dbReference>
<dbReference type="NCBIfam" id="NF002618">
    <property type="entry name" value="PRK02269.1"/>
    <property type="match status" value="1"/>
</dbReference>
<dbReference type="NCBIfam" id="TIGR01251">
    <property type="entry name" value="ribP_PPkin"/>
    <property type="match status" value="1"/>
</dbReference>
<dbReference type="PANTHER" id="PTHR10210">
    <property type="entry name" value="RIBOSE-PHOSPHATE DIPHOSPHOKINASE FAMILY MEMBER"/>
    <property type="match status" value="1"/>
</dbReference>
<dbReference type="PANTHER" id="PTHR10210:SF41">
    <property type="entry name" value="RIBOSE-PHOSPHATE PYROPHOSPHOKINASE 1, CHLOROPLASTIC"/>
    <property type="match status" value="1"/>
</dbReference>
<dbReference type="Pfam" id="PF14572">
    <property type="entry name" value="Pribosyl_synth"/>
    <property type="match status" value="1"/>
</dbReference>
<dbReference type="Pfam" id="PF13793">
    <property type="entry name" value="Pribosyltran_N"/>
    <property type="match status" value="1"/>
</dbReference>
<dbReference type="SMART" id="SM01400">
    <property type="entry name" value="Pribosyltran_N"/>
    <property type="match status" value="1"/>
</dbReference>
<dbReference type="SUPFAM" id="SSF53271">
    <property type="entry name" value="PRTase-like"/>
    <property type="match status" value="1"/>
</dbReference>
<dbReference type="PROSITE" id="PS00114">
    <property type="entry name" value="PRPP_SYNTHASE"/>
    <property type="match status" value="1"/>
</dbReference>
<sequence length="322" mass="35451">MSFSDLKLFALSSNKELAERVAQEIGIELGKSSVRQFSDGEIQVNIEESIRGKHVFILQSTSSPVNDNLLEILIMVDALKRASAESVNVVMPYYGYARQDRKARAREPITSKLVANMLEVAGVDRLLTIDLHAAQIQGFFDIPVDHLMGAPLIADYFERRGMVGSDYVVVSPDHGGVTRARKLAEFLKTSIAIIDKRRSVDKMNTSEVMNIIGKVEGKTCILIDDMIDTAGTICHAADALAEAGAVEVYASCTHPVLSGPATDNIQKSAIKKLVVLDTIYLPEERLIDKIEQISIAHLLGDAIVRIHEKRPLSPLFDIEKKI</sequence>
<reference key="1">
    <citation type="journal article" date="2001" name="J. Bacteriol.">
        <title>Genome of the bacterium Streptococcus pneumoniae strain R6.</title>
        <authorList>
            <person name="Hoskins J."/>
            <person name="Alborn W.E. Jr."/>
            <person name="Arnold J."/>
            <person name="Blaszczak L.C."/>
            <person name="Burgett S."/>
            <person name="DeHoff B.S."/>
            <person name="Estrem S.T."/>
            <person name="Fritz L."/>
            <person name="Fu D.-J."/>
            <person name="Fuller W."/>
            <person name="Geringer C."/>
            <person name="Gilmour R."/>
            <person name="Glass J.S."/>
            <person name="Khoja H."/>
            <person name="Kraft A.R."/>
            <person name="Lagace R.E."/>
            <person name="LeBlanc D.J."/>
            <person name="Lee L.N."/>
            <person name="Lefkowitz E.J."/>
            <person name="Lu J."/>
            <person name="Matsushima P."/>
            <person name="McAhren S.M."/>
            <person name="McHenney M."/>
            <person name="McLeaster K."/>
            <person name="Mundy C.W."/>
            <person name="Nicas T.I."/>
            <person name="Norris F.H."/>
            <person name="O'Gara M."/>
            <person name="Peery R.B."/>
            <person name="Robertson G.T."/>
            <person name="Rockey P."/>
            <person name="Sun P.-M."/>
            <person name="Winkler M.E."/>
            <person name="Yang Y."/>
            <person name="Young-Bellido M."/>
            <person name="Zhao G."/>
            <person name="Zook C.A."/>
            <person name="Baltz R.H."/>
            <person name="Jaskunas S.R."/>
            <person name="Rosteck P.R. Jr."/>
            <person name="Skatrud P.L."/>
            <person name="Glass J.I."/>
        </authorList>
    </citation>
    <scope>NUCLEOTIDE SEQUENCE [LARGE SCALE GENOMIC DNA]</scope>
    <source>
        <strain>ATCC BAA-255 / R6</strain>
    </source>
</reference>
<accession>P65240</accession>
<accession>Q97TB4</accession>
<proteinExistence type="inferred from homology"/>
<protein>
    <recommendedName>
        <fullName evidence="1">Ribose-phosphate pyrophosphokinase 1</fullName>
        <shortName evidence="1">RPPK 1</shortName>
        <ecNumber evidence="1">2.7.6.1</ecNumber>
    </recommendedName>
    <alternativeName>
        <fullName evidence="1">5-phospho-D-ribosyl alpha-1-diphosphate synthase 1</fullName>
    </alternativeName>
    <alternativeName>
        <fullName evidence="1">Phosphoribosyl diphosphate synthase 1</fullName>
    </alternativeName>
    <alternativeName>
        <fullName evidence="1">Phosphoribosyl pyrophosphate synthase 1</fullName>
        <shortName evidence="1">P-Rib-PP synthase 1</shortName>
        <shortName evidence="1">PRPP synthase 1</shortName>
        <shortName evidence="1">PRPPase 1</shortName>
    </alternativeName>
</protein>
<organism>
    <name type="scientific">Streptococcus pneumoniae (strain ATCC BAA-255 / R6)</name>
    <dbReference type="NCBI Taxonomy" id="171101"/>
    <lineage>
        <taxon>Bacteria</taxon>
        <taxon>Bacillati</taxon>
        <taxon>Bacillota</taxon>
        <taxon>Bacilli</taxon>
        <taxon>Lactobacillales</taxon>
        <taxon>Streptococcaceae</taxon>
        <taxon>Streptococcus</taxon>
    </lineage>
</organism>
<comment type="function">
    <text evidence="1">Involved in the biosynthesis of the central metabolite phospho-alpha-D-ribosyl-1-pyrophosphate (PRPP) via the transfer of pyrophosphoryl group from ATP to 1-hydroxyl of ribose-5-phosphate (Rib-5-P).</text>
</comment>
<comment type="catalytic activity">
    <reaction evidence="1">
        <text>D-ribose 5-phosphate + ATP = 5-phospho-alpha-D-ribose 1-diphosphate + AMP + H(+)</text>
        <dbReference type="Rhea" id="RHEA:15609"/>
        <dbReference type="ChEBI" id="CHEBI:15378"/>
        <dbReference type="ChEBI" id="CHEBI:30616"/>
        <dbReference type="ChEBI" id="CHEBI:58017"/>
        <dbReference type="ChEBI" id="CHEBI:78346"/>
        <dbReference type="ChEBI" id="CHEBI:456215"/>
        <dbReference type="EC" id="2.7.6.1"/>
    </reaction>
</comment>
<comment type="cofactor">
    <cofactor evidence="1">
        <name>Mg(2+)</name>
        <dbReference type="ChEBI" id="CHEBI:18420"/>
    </cofactor>
    <text evidence="1">Binds 2 Mg(2+) ions per subunit.</text>
</comment>
<comment type="pathway">
    <text evidence="1">Metabolic intermediate biosynthesis; 5-phospho-alpha-D-ribose 1-diphosphate biosynthesis; 5-phospho-alpha-D-ribose 1-diphosphate from D-ribose 5-phosphate (route I): step 1/1.</text>
</comment>
<comment type="subunit">
    <text evidence="1">Homohexamer.</text>
</comment>
<comment type="subcellular location">
    <subcellularLocation>
        <location evidence="1">Cytoplasm</location>
    </subcellularLocation>
</comment>
<comment type="similarity">
    <text evidence="1">Belongs to the ribose-phosphate pyrophosphokinase family. Class I subfamily.</text>
</comment>
<comment type="sequence caution" evidence="2">
    <conflict type="erroneous initiation">
        <sequence resource="EMBL-CDS" id="AAK98832"/>
    </conflict>
    <text>Extended N-terminus.</text>
</comment>
<gene>
    <name evidence="1" type="primary">prs1</name>
    <name type="synonym">prsA</name>
    <name type="ordered locus">spr0028</name>
</gene>
<evidence type="ECO:0000255" key="1">
    <source>
        <dbReference type="HAMAP-Rule" id="MF_00583"/>
    </source>
</evidence>
<evidence type="ECO:0000305" key="2"/>
<name>KPRS1_STRR6</name>
<keyword id="KW-0067">ATP-binding</keyword>
<keyword id="KW-0963">Cytoplasm</keyword>
<keyword id="KW-0418">Kinase</keyword>
<keyword id="KW-0460">Magnesium</keyword>
<keyword id="KW-0479">Metal-binding</keyword>
<keyword id="KW-0545">Nucleotide biosynthesis</keyword>
<keyword id="KW-0547">Nucleotide-binding</keyword>
<keyword id="KW-1185">Reference proteome</keyword>
<keyword id="KW-0808">Transferase</keyword>
<feature type="chain" id="PRO_0000141205" description="Ribose-phosphate pyrophosphokinase 1">
    <location>
        <begin position="1"/>
        <end position="322"/>
    </location>
</feature>
<feature type="active site" evidence="1">
    <location>
        <position position="196"/>
    </location>
</feature>
<feature type="binding site" evidence="1">
    <location>
        <begin position="39"/>
        <end position="41"/>
    </location>
    <ligand>
        <name>ATP</name>
        <dbReference type="ChEBI" id="CHEBI:30616"/>
    </ligand>
</feature>
<feature type="binding site" evidence="1">
    <location>
        <begin position="98"/>
        <end position="99"/>
    </location>
    <ligand>
        <name>ATP</name>
        <dbReference type="ChEBI" id="CHEBI:30616"/>
    </ligand>
</feature>
<feature type="binding site" evidence="1">
    <location>
        <position position="132"/>
    </location>
    <ligand>
        <name>Mg(2+)</name>
        <dbReference type="ChEBI" id="CHEBI:18420"/>
        <label>1</label>
    </ligand>
</feature>
<feature type="binding site" evidence="1">
    <location>
        <position position="173"/>
    </location>
    <ligand>
        <name>Mg(2+)</name>
        <dbReference type="ChEBI" id="CHEBI:18420"/>
        <label>2</label>
    </ligand>
</feature>
<feature type="binding site" evidence="1">
    <location>
        <position position="198"/>
    </location>
    <ligand>
        <name>D-ribose 5-phosphate</name>
        <dbReference type="ChEBI" id="CHEBI:78346"/>
    </ligand>
</feature>
<feature type="binding site" evidence="1">
    <location>
        <position position="224"/>
    </location>
    <ligand>
        <name>D-ribose 5-phosphate</name>
        <dbReference type="ChEBI" id="CHEBI:78346"/>
    </ligand>
</feature>
<feature type="binding site" evidence="1">
    <location>
        <begin position="228"/>
        <end position="232"/>
    </location>
    <ligand>
        <name>D-ribose 5-phosphate</name>
        <dbReference type="ChEBI" id="CHEBI:78346"/>
    </ligand>
</feature>